<feature type="chain" id="PRO_1000006444" description="tRNA (guanine-N(1)-)-methyltransferase">
    <location>
        <begin position="1"/>
        <end position="249"/>
    </location>
</feature>
<feature type="binding site" evidence="1">
    <location>
        <position position="113"/>
    </location>
    <ligand>
        <name>S-adenosyl-L-methionine</name>
        <dbReference type="ChEBI" id="CHEBI:59789"/>
    </ligand>
</feature>
<feature type="binding site" evidence="1">
    <location>
        <begin position="133"/>
        <end position="138"/>
    </location>
    <ligand>
        <name>S-adenosyl-L-methionine</name>
        <dbReference type="ChEBI" id="CHEBI:59789"/>
    </ligand>
</feature>
<reference key="1">
    <citation type="journal article" date="2006" name="J. Bacteriol.">
        <title>Genome sequence of Aeromonas hydrophila ATCC 7966T: jack of all trades.</title>
        <authorList>
            <person name="Seshadri R."/>
            <person name="Joseph S.W."/>
            <person name="Chopra A.K."/>
            <person name="Sha J."/>
            <person name="Shaw J."/>
            <person name="Graf J."/>
            <person name="Haft D.H."/>
            <person name="Wu M."/>
            <person name="Ren Q."/>
            <person name="Rosovitz M.J."/>
            <person name="Madupu R."/>
            <person name="Tallon L."/>
            <person name="Kim M."/>
            <person name="Jin S."/>
            <person name="Vuong H."/>
            <person name="Stine O.C."/>
            <person name="Ali A."/>
            <person name="Horneman A.J."/>
            <person name="Heidelberg J.F."/>
        </authorList>
    </citation>
    <scope>NUCLEOTIDE SEQUENCE [LARGE SCALE GENOMIC DNA]</scope>
    <source>
        <strain>ATCC 7966 / DSM 30187 / BCRC 13018 / CCUG 14551 / JCM 1027 / KCTC 2358 / NCIMB 9240 / NCTC 8049</strain>
    </source>
</reference>
<proteinExistence type="inferred from homology"/>
<gene>
    <name evidence="1" type="primary">trmD</name>
    <name type="ordered locus">AHA_0668</name>
</gene>
<name>TRMD_AERHH</name>
<protein>
    <recommendedName>
        <fullName evidence="1">tRNA (guanine-N(1)-)-methyltransferase</fullName>
        <ecNumber evidence="1">2.1.1.228</ecNumber>
    </recommendedName>
    <alternativeName>
        <fullName evidence="1">M1G-methyltransferase</fullName>
    </alternativeName>
    <alternativeName>
        <fullName evidence="1">tRNA [GM37] methyltransferase</fullName>
    </alternativeName>
</protein>
<accession>A0KG25</accession>
<dbReference type="EC" id="2.1.1.228" evidence="1"/>
<dbReference type="EMBL" id="CP000462">
    <property type="protein sequence ID" value="ABK39410.1"/>
    <property type="molecule type" value="Genomic_DNA"/>
</dbReference>
<dbReference type="RefSeq" id="WP_011704631.1">
    <property type="nucleotide sequence ID" value="NC_008570.1"/>
</dbReference>
<dbReference type="RefSeq" id="YP_855210.1">
    <property type="nucleotide sequence ID" value="NC_008570.1"/>
</dbReference>
<dbReference type="SMR" id="A0KG25"/>
<dbReference type="STRING" id="380703.AHA_0668"/>
<dbReference type="EnsemblBacteria" id="ABK39410">
    <property type="protein sequence ID" value="ABK39410"/>
    <property type="gene ID" value="AHA_0668"/>
</dbReference>
<dbReference type="GeneID" id="89582438"/>
<dbReference type="KEGG" id="aha:AHA_0668"/>
<dbReference type="PATRIC" id="fig|380703.7.peg.669"/>
<dbReference type="eggNOG" id="COG0336">
    <property type="taxonomic scope" value="Bacteria"/>
</dbReference>
<dbReference type="HOGENOM" id="CLU_047363_0_1_6"/>
<dbReference type="OrthoDB" id="9807416at2"/>
<dbReference type="Proteomes" id="UP000000756">
    <property type="component" value="Chromosome"/>
</dbReference>
<dbReference type="GO" id="GO:0005829">
    <property type="term" value="C:cytosol"/>
    <property type="evidence" value="ECO:0007669"/>
    <property type="project" value="TreeGrafter"/>
</dbReference>
<dbReference type="GO" id="GO:0052906">
    <property type="term" value="F:tRNA (guanine(37)-N1)-methyltransferase activity"/>
    <property type="evidence" value="ECO:0007669"/>
    <property type="project" value="UniProtKB-UniRule"/>
</dbReference>
<dbReference type="GO" id="GO:0002939">
    <property type="term" value="P:tRNA N1-guanine methylation"/>
    <property type="evidence" value="ECO:0007669"/>
    <property type="project" value="TreeGrafter"/>
</dbReference>
<dbReference type="CDD" id="cd18080">
    <property type="entry name" value="TrmD-like"/>
    <property type="match status" value="1"/>
</dbReference>
<dbReference type="FunFam" id="1.10.1270.20:FF:000001">
    <property type="entry name" value="tRNA (guanine-N(1)-)-methyltransferase"/>
    <property type="match status" value="1"/>
</dbReference>
<dbReference type="FunFam" id="3.40.1280.10:FF:000001">
    <property type="entry name" value="tRNA (guanine-N(1)-)-methyltransferase"/>
    <property type="match status" value="1"/>
</dbReference>
<dbReference type="Gene3D" id="3.40.1280.10">
    <property type="match status" value="1"/>
</dbReference>
<dbReference type="Gene3D" id="1.10.1270.20">
    <property type="entry name" value="tRNA(m1g37)methyltransferase, domain 2"/>
    <property type="match status" value="1"/>
</dbReference>
<dbReference type="HAMAP" id="MF_00605">
    <property type="entry name" value="TrmD"/>
    <property type="match status" value="1"/>
</dbReference>
<dbReference type="InterPro" id="IPR029028">
    <property type="entry name" value="Alpha/beta_knot_MTases"/>
</dbReference>
<dbReference type="InterPro" id="IPR023148">
    <property type="entry name" value="tRNA_m1G_MeTrfase_C_sf"/>
</dbReference>
<dbReference type="InterPro" id="IPR002649">
    <property type="entry name" value="tRNA_m1G_MeTrfase_TrmD"/>
</dbReference>
<dbReference type="InterPro" id="IPR029026">
    <property type="entry name" value="tRNA_m1G_MTases_N"/>
</dbReference>
<dbReference type="InterPro" id="IPR016009">
    <property type="entry name" value="tRNA_MeTrfase_TRMD/TRM10"/>
</dbReference>
<dbReference type="NCBIfam" id="NF000648">
    <property type="entry name" value="PRK00026.1"/>
    <property type="match status" value="1"/>
</dbReference>
<dbReference type="NCBIfam" id="TIGR00088">
    <property type="entry name" value="trmD"/>
    <property type="match status" value="1"/>
</dbReference>
<dbReference type="PANTHER" id="PTHR46417">
    <property type="entry name" value="TRNA (GUANINE-N(1)-)-METHYLTRANSFERASE"/>
    <property type="match status" value="1"/>
</dbReference>
<dbReference type="PANTHER" id="PTHR46417:SF1">
    <property type="entry name" value="TRNA (GUANINE-N(1)-)-METHYLTRANSFERASE"/>
    <property type="match status" value="1"/>
</dbReference>
<dbReference type="Pfam" id="PF01746">
    <property type="entry name" value="tRNA_m1G_MT"/>
    <property type="match status" value="1"/>
</dbReference>
<dbReference type="PIRSF" id="PIRSF000386">
    <property type="entry name" value="tRNA_mtase"/>
    <property type="match status" value="1"/>
</dbReference>
<dbReference type="SUPFAM" id="SSF75217">
    <property type="entry name" value="alpha/beta knot"/>
    <property type="match status" value="1"/>
</dbReference>
<keyword id="KW-0963">Cytoplasm</keyword>
<keyword id="KW-0489">Methyltransferase</keyword>
<keyword id="KW-1185">Reference proteome</keyword>
<keyword id="KW-0949">S-adenosyl-L-methionine</keyword>
<keyword id="KW-0808">Transferase</keyword>
<keyword id="KW-0819">tRNA processing</keyword>
<evidence type="ECO:0000255" key="1">
    <source>
        <dbReference type="HAMAP-Rule" id="MF_00605"/>
    </source>
</evidence>
<organism>
    <name type="scientific">Aeromonas hydrophila subsp. hydrophila (strain ATCC 7966 / DSM 30187 / BCRC 13018 / CCUG 14551 / JCM 1027 / KCTC 2358 / NCIMB 9240 / NCTC 8049)</name>
    <dbReference type="NCBI Taxonomy" id="380703"/>
    <lineage>
        <taxon>Bacteria</taxon>
        <taxon>Pseudomonadati</taxon>
        <taxon>Pseudomonadota</taxon>
        <taxon>Gammaproteobacteria</taxon>
        <taxon>Aeromonadales</taxon>
        <taxon>Aeromonadaceae</taxon>
        <taxon>Aeromonas</taxon>
    </lineage>
</organism>
<comment type="function">
    <text evidence="1">Specifically methylates guanosine-37 in various tRNAs.</text>
</comment>
<comment type="catalytic activity">
    <reaction evidence="1">
        <text>guanosine(37) in tRNA + S-adenosyl-L-methionine = N(1)-methylguanosine(37) in tRNA + S-adenosyl-L-homocysteine + H(+)</text>
        <dbReference type="Rhea" id="RHEA:36899"/>
        <dbReference type="Rhea" id="RHEA-COMP:10145"/>
        <dbReference type="Rhea" id="RHEA-COMP:10147"/>
        <dbReference type="ChEBI" id="CHEBI:15378"/>
        <dbReference type="ChEBI" id="CHEBI:57856"/>
        <dbReference type="ChEBI" id="CHEBI:59789"/>
        <dbReference type="ChEBI" id="CHEBI:73542"/>
        <dbReference type="ChEBI" id="CHEBI:74269"/>
        <dbReference type="EC" id="2.1.1.228"/>
    </reaction>
</comment>
<comment type="subunit">
    <text evidence="1">Homodimer.</text>
</comment>
<comment type="subcellular location">
    <subcellularLocation>
        <location evidence="1">Cytoplasm</location>
    </subcellularLocation>
</comment>
<comment type="similarity">
    <text evidence="1">Belongs to the RNA methyltransferase TrmD family.</text>
</comment>
<sequence length="249" mass="27689">MWIGVISLFPEMFRAITEHGVTGRAVKSGLLQIECWNPRDFTHDKHRTVDDRPYGGGPGMLMMVQPLRDAIHAAKQAAGDGAKVIYLSPQGRKLTQAGVTELATNQKLILVAGRYEGIDERVIQTEVDEEWSIGDYVLSGGELPAMTLIDAVSRLVPGVLGDQASAEQDSFTDGLLDHPHYTRPELLDGLAVPEALTSGNHEVIRRWRLKQSLGRTWQRRPELINNLALTDEQESLLAEYVREVRDSVK</sequence>